<gene>
    <name evidence="1" type="primary">citX</name>
    <name type="ordered locus">EcE24377A_0636</name>
</gene>
<sequence length="183" mass="20201">MHLLPELASHHAVSIPELLVSRDERQARQHVWLKRHPVPLVSFTVVAPGPIKDSEVTRRIFNHGVTALRALAAKQGWQIQEQAALVSASGPEGMLSIAAPARDLKLATIELEHSHPLGRLWDIDVLTPEGEILSRRDYSLPPRSCLLCEQSAAVCARGKTHQLTDLLNRMEALLNDVDACNVN</sequence>
<organism>
    <name type="scientific">Escherichia coli O139:H28 (strain E24377A / ETEC)</name>
    <dbReference type="NCBI Taxonomy" id="331111"/>
    <lineage>
        <taxon>Bacteria</taxon>
        <taxon>Pseudomonadati</taxon>
        <taxon>Pseudomonadota</taxon>
        <taxon>Gammaproteobacteria</taxon>
        <taxon>Enterobacterales</taxon>
        <taxon>Enterobacteriaceae</taxon>
        <taxon>Escherichia</taxon>
    </lineage>
</organism>
<proteinExistence type="inferred from homology"/>
<evidence type="ECO:0000255" key="1">
    <source>
        <dbReference type="HAMAP-Rule" id="MF_00398"/>
    </source>
</evidence>
<dbReference type="EC" id="2.7.7.61" evidence="1"/>
<dbReference type="EMBL" id="CP000800">
    <property type="protein sequence ID" value="ABV16668.1"/>
    <property type="molecule type" value="Genomic_DNA"/>
</dbReference>
<dbReference type="RefSeq" id="WP_000550424.1">
    <property type="nucleotide sequence ID" value="NC_009801.1"/>
</dbReference>
<dbReference type="SMR" id="A7ZJ00"/>
<dbReference type="KEGG" id="ecw:EcE24377A_0636"/>
<dbReference type="HOGENOM" id="CLU_104529_1_1_6"/>
<dbReference type="Proteomes" id="UP000001122">
    <property type="component" value="Chromosome"/>
</dbReference>
<dbReference type="GO" id="GO:0050519">
    <property type="term" value="F:holo-citrate lyase synthase activity"/>
    <property type="evidence" value="ECO:0007669"/>
    <property type="project" value="UniProtKB-UniRule"/>
</dbReference>
<dbReference type="GO" id="GO:0051191">
    <property type="term" value="P:prosthetic group biosynthetic process"/>
    <property type="evidence" value="ECO:0007669"/>
    <property type="project" value="InterPro"/>
</dbReference>
<dbReference type="HAMAP" id="MF_00398">
    <property type="entry name" value="CitX"/>
    <property type="match status" value="1"/>
</dbReference>
<dbReference type="InterPro" id="IPR005551">
    <property type="entry name" value="CitX"/>
</dbReference>
<dbReference type="NCBIfam" id="TIGR03124">
    <property type="entry name" value="citrate_citX"/>
    <property type="match status" value="1"/>
</dbReference>
<dbReference type="NCBIfam" id="NF002383">
    <property type="entry name" value="PRK01392.1"/>
    <property type="match status" value="1"/>
</dbReference>
<dbReference type="Pfam" id="PF03802">
    <property type="entry name" value="CitX"/>
    <property type="match status" value="1"/>
</dbReference>
<keyword id="KW-0548">Nucleotidyltransferase</keyword>
<keyword id="KW-1185">Reference proteome</keyword>
<keyword id="KW-0808">Transferase</keyword>
<reference key="1">
    <citation type="journal article" date="2008" name="J. Bacteriol.">
        <title>The pangenome structure of Escherichia coli: comparative genomic analysis of E. coli commensal and pathogenic isolates.</title>
        <authorList>
            <person name="Rasko D.A."/>
            <person name="Rosovitz M.J."/>
            <person name="Myers G.S.A."/>
            <person name="Mongodin E.F."/>
            <person name="Fricke W.F."/>
            <person name="Gajer P."/>
            <person name="Crabtree J."/>
            <person name="Sebaihia M."/>
            <person name="Thomson N.R."/>
            <person name="Chaudhuri R."/>
            <person name="Henderson I.R."/>
            <person name="Sperandio V."/>
            <person name="Ravel J."/>
        </authorList>
    </citation>
    <scope>NUCLEOTIDE SEQUENCE [LARGE SCALE GENOMIC DNA]</scope>
    <source>
        <strain>E24377A / ETEC</strain>
    </source>
</reference>
<name>CITX_ECO24</name>
<accession>A7ZJ00</accession>
<protein>
    <recommendedName>
        <fullName>Apo-citrate lyase phosphoribosyl-dephospho-CoA transferase</fullName>
        <ecNumber evidence="1">2.7.7.61</ecNumber>
    </recommendedName>
    <alternativeName>
        <fullName evidence="1">Apo-ACP nucleodityltransferase</fullName>
    </alternativeName>
    <alternativeName>
        <fullName evidence="1">Holo-ACP synthase</fullName>
    </alternativeName>
    <alternativeName>
        <fullName evidence="1">Holo-citrate lyase synthase</fullName>
    </alternativeName>
</protein>
<feature type="chain" id="PRO_1000060793" description="Apo-citrate lyase phosphoribosyl-dephospho-CoA transferase">
    <location>
        <begin position="1"/>
        <end position="183"/>
    </location>
</feature>
<comment type="function">
    <text evidence="1">Transfers 2-(5''-triphosphoribosyl)-3'-dephosphocoenzyme-A on a serine residue to the apo-acyl carrier protein (gamma chain) of the citrate lyase to yield holo-acyl carrier protein.</text>
</comment>
<comment type="catalytic activity">
    <reaction evidence="1">
        <text>apo-[citrate lyase ACP] + 2'-(5''-triphospho-alpha-D-ribosyl)-3'-dephospho-CoA = holo-[citrate lyase ACP] + diphosphate</text>
        <dbReference type="Rhea" id="RHEA:16333"/>
        <dbReference type="Rhea" id="RHEA-COMP:10157"/>
        <dbReference type="Rhea" id="RHEA-COMP:10158"/>
        <dbReference type="ChEBI" id="CHEBI:29999"/>
        <dbReference type="ChEBI" id="CHEBI:33019"/>
        <dbReference type="ChEBI" id="CHEBI:61378"/>
        <dbReference type="ChEBI" id="CHEBI:82683"/>
        <dbReference type="EC" id="2.7.7.61"/>
    </reaction>
</comment>
<comment type="similarity">
    <text evidence="1">Belongs to the CitX family.</text>
</comment>